<organism>
    <name type="scientific">Streptococcus pyogenes serotype M3 (strain ATCC BAA-595 / MGAS315)</name>
    <dbReference type="NCBI Taxonomy" id="198466"/>
    <lineage>
        <taxon>Bacteria</taxon>
        <taxon>Bacillati</taxon>
        <taxon>Bacillota</taxon>
        <taxon>Bacilli</taxon>
        <taxon>Lactobacillales</taxon>
        <taxon>Streptococcaceae</taxon>
        <taxon>Streptococcus</taxon>
    </lineage>
</organism>
<comment type="function">
    <text evidence="1">Catalyzes the attachment of isoleucine to tRNA(Ile). As IleRS can inadvertently accommodate and process structurally similar amino acids such as valine, to avoid such errors it has two additional distinct tRNA(Ile)-dependent editing activities. One activity is designated as 'pretransfer' editing and involves the hydrolysis of activated Val-AMP. The other activity is designated 'posttransfer' editing and involves deacylation of mischarged Val-tRNA(Ile).</text>
</comment>
<comment type="catalytic activity">
    <reaction evidence="1">
        <text>tRNA(Ile) + L-isoleucine + ATP = L-isoleucyl-tRNA(Ile) + AMP + diphosphate</text>
        <dbReference type="Rhea" id="RHEA:11060"/>
        <dbReference type="Rhea" id="RHEA-COMP:9666"/>
        <dbReference type="Rhea" id="RHEA-COMP:9695"/>
        <dbReference type="ChEBI" id="CHEBI:30616"/>
        <dbReference type="ChEBI" id="CHEBI:33019"/>
        <dbReference type="ChEBI" id="CHEBI:58045"/>
        <dbReference type="ChEBI" id="CHEBI:78442"/>
        <dbReference type="ChEBI" id="CHEBI:78528"/>
        <dbReference type="ChEBI" id="CHEBI:456215"/>
        <dbReference type="EC" id="6.1.1.5"/>
    </reaction>
</comment>
<comment type="subunit">
    <text evidence="1">Monomer.</text>
</comment>
<comment type="subcellular location">
    <subcellularLocation>
        <location evidence="1">Cytoplasm</location>
    </subcellularLocation>
</comment>
<comment type="domain">
    <text evidence="1">IleRS has two distinct active sites: one for aminoacylation and one for editing. The misactivated valine is translocated from the active site to the editing site, which sterically excludes the correctly activated isoleucine. The single editing site contains two valyl binding pockets, one specific for each substrate (Val-AMP or Val-tRNA(Ile)).</text>
</comment>
<comment type="similarity">
    <text evidence="1">Belongs to the class-I aminoacyl-tRNA synthetase family. IleS type 1 subfamily.</text>
</comment>
<feature type="chain" id="PRO_0000098484" description="Isoleucine--tRNA ligase">
    <location>
        <begin position="1"/>
        <end position="933"/>
    </location>
</feature>
<feature type="short sequence motif" description="'HIGH' region">
    <location>
        <begin position="57"/>
        <end position="67"/>
    </location>
</feature>
<feature type="short sequence motif" description="'KMSKS' region">
    <location>
        <begin position="595"/>
        <end position="599"/>
    </location>
</feature>
<feature type="binding site" evidence="1">
    <location>
        <position position="554"/>
    </location>
    <ligand>
        <name>L-isoleucyl-5'-AMP</name>
        <dbReference type="ChEBI" id="CHEBI:178002"/>
    </ligand>
</feature>
<feature type="binding site" evidence="1">
    <location>
        <position position="598"/>
    </location>
    <ligand>
        <name>ATP</name>
        <dbReference type="ChEBI" id="CHEBI:30616"/>
    </ligand>
</feature>
<name>SYI_STRP3</name>
<evidence type="ECO:0000255" key="1">
    <source>
        <dbReference type="HAMAP-Rule" id="MF_02002"/>
    </source>
</evidence>
<sequence>MKLKETLNLGKTAFPMRAGLPNKEPQWQAAWEEADLYTKRQELNAGKPAFHLHDGPPYANGNIHVGHALNKISKDIIVRSKSMSGFHVPYVPGWDTHGLPIEQVLAKQGVKRKEMDLADYLDMCRQYALSQVDKQRDDFKRLGVSADWENPYVTLDPQFEADQIRVFGAMADKGYIYRGAKPVYWSWSSESALAEAEIEYHDIDSTSLYYANKVKDGKGILDTNTYIVVWTTTPFTVTASRGLTVGPDMDYLVVKPAGSDRQYVVAEGLLDSLAGKFGWESFETLASHKGADLEYIVTEHPWDTDVEELVILGDHVTLESGTGIVHTAPGFGEDDYNVGTKYKLEVAVTVDERGLMMENAGPDFHGQFYDKVTPIVIDKLGDLLLAQEVINHSYPFDWRTKKPIIWRAVPQWFASVSDFRQDILDEIEKTTFHPSWGKTRLYNMIRDRGDWVISRQRAWGVPLPIFYAEDGTAIMTKEVTDHVANLFQENGSIIWWQKEAKDLLPEGFTHPGSPNGEFTKETDIMDVWFDSGSSWNGVMNARDNLSYPADLYLEGSDQYRGWFNSSLITSVAVNGHAPYKAILSQGFVLDGKGEKMSKSKGNIISPNDVAKQYGADILRLWVASVDTDNDVRVSMEILGQVSETYRKIRNTLRFLIANTSDFNPATDTVAYADLGAVDKYMTIVFNQLVATINDAYERYDFMTIYKAVVNFVTVDLSAFYLDFAKDVVYIEAANSLERRRMQTVFYDILVKITKLLTPILPHTTEEIWSYLEHESEAFVQLAEMPAAETFSAQEDILEAWSAFMTLRTQAQKALEEARNAKVIGKSLEAHLTIYASEEVKTLLTALDSDIALLLIVSQLTIADLADAPADAVAFEGVAFTVEHAVGEVCERSRRIDPTTRMRSYNAFVCDHSAKIIEENFPEAVAEGFEESGK</sequence>
<proteinExistence type="inferred from homology"/>
<accession>P0DG42</accession>
<accession>Q79XQ2</accession>
<accession>Q8K6S2</accession>
<dbReference type="EC" id="6.1.1.5" evidence="1"/>
<dbReference type="EMBL" id="AE014074">
    <property type="protein sequence ID" value="AAM79773.1"/>
    <property type="molecule type" value="Genomic_DNA"/>
</dbReference>
<dbReference type="RefSeq" id="WP_011054710.1">
    <property type="nucleotide sequence ID" value="NC_004070.1"/>
</dbReference>
<dbReference type="SMR" id="P0DG42"/>
<dbReference type="KEGG" id="spg:SpyM3_1166"/>
<dbReference type="HOGENOM" id="CLU_001493_7_1_9"/>
<dbReference type="Proteomes" id="UP000000564">
    <property type="component" value="Chromosome"/>
</dbReference>
<dbReference type="GO" id="GO:0005829">
    <property type="term" value="C:cytosol"/>
    <property type="evidence" value="ECO:0007669"/>
    <property type="project" value="TreeGrafter"/>
</dbReference>
<dbReference type="GO" id="GO:0002161">
    <property type="term" value="F:aminoacyl-tRNA deacylase activity"/>
    <property type="evidence" value="ECO:0007669"/>
    <property type="project" value="InterPro"/>
</dbReference>
<dbReference type="GO" id="GO:0005524">
    <property type="term" value="F:ATP binding"/>
    <property type="evidence" value="ECO:0007669"/>
    <property type="project" value="UniProtKB-UniRule"/>
</dbReference>
<dbReference type="GO" id="GO:0004822">
    <property type="term" value="F:isoleucine-tRNA ligase activity"/>
    <property type="evidence" value="ECO:0007669"/>
    <property type="project" value="UniProtKB-UniRule"/>
</dbReference>
<dbReference type="GO" id="GO:0000049">
    <property type="term" value="F:tRNA binding"/>
    <property type="evidence" value="ECO:0007669"/>
    <property type="project" value="InterPro"/>
</dbReference>
<dbReference type="GO" id="GO:0006428">
    <property type="term" value="P:isoleucyl-tRNA aminoacylation"/>
    <property type="evidence" value="ECO:0007669"/>
    <property type="project" value="UniProtKB-UniRule"/>
</dbReference>
<dbReference type="CDD" id="cd07960">
    <property type="entry name" value="Anticodon_Ia_Ile_BEm"/>
    <property type="match status" value="1"/>
</dbReference>
<dbReference type="CDD" id="cd00818">
    <property type="entry name" value="IleRS_core"/>
    <property type="match status" value="1"/>
</dbReference>
<dbReference type="FunFam" id="1.10.10.830:FF:000001">
    <property type="entry name" value="Isoleucine--tRNA ligase"/>
    <property type="match status" value="1"/>
</dbReference>
<dbReference type="FunFam" id="1.10.730.20:FF:000001">
    <property type="entry name" value="Isoleucine--tRNA ligase"/>
    <property type="match status" value="1"/>
</dbReference>
<dbReference type="FunFam" id="3.40.50.620:FF:000092">
    <property type="entry name" value="Isoleucine--tRNA ligase"/>
    <property type="match status" value="1"/>
</dbReference>
<dbReference type="FunFam" id="3.90.740.10:FF:000006">
    <property type="entry name" value="Isoleucine--tRNA ligase"/>
    <property type="match status" value="1"/>
</dbReference>
<dbReference type="Gene3D" id="1.10.730.20">
    <property type="match status" value="1"/>
</dbReference>
<dbReference type="Gene3D" id="3.40.50.620">
    <property type="entry name" value="HUPs"/>
    <property type="match status" value="2"/>
</dbReference>
<dbReference type="Gene3D" id="1.10.10.830">
    <property type="entry name" value="Ile-tRNA synthetase CP2 domain-like"/>
    <property type="match status" value="1"/>
</dbReference>
<dbReference type="HAMAP" id="MF_02002">
    <property type="entry name" value="Ile_tRNA_synth_type1"/>
    <property type="match status" value="1"/>
</dbReference>
<dbReference type="InterPro" id="IPR001412">
    <property type="entry name" value="aa-tRNA-synth_I_CS"/>
</dbReference>
<dbReference type="InterPro" id="IPR002300">
    <property type="entry name" value="aa-tRNA-synth_Ia"/>
</dbReference>
<dbReference type="InterPro" id="IPR033708">
    <property type="entry name" value="Anticodon_Ile_BEm"/>
</dbReference>
<dbReference type="InterPro" id="IPR002301">
    <property type="entry name" value="Ile-tRNA-ligase"/>
</dbReference>
<dbReference type="InterPro" id="IPR023585">
    <property type="entry name" value="Ile-tRNA-ligase_type1"/>
</dbReference>
<dbReference type="InterPro" id="IPR050081">
    <property type="entry name" value="Ile-tRNA_ligase"/>
</dbReference>
<dbReference type="InterPro" id="IPR013155">
    <property type="entry name" value="M/V/L/I-tRNA-synth_anticd-bd"/>
</dbReference>
<dbReference type="InterPro" id="IPR014729">
    <property type="entry name" value="Rossmann-like_a/b/a_fold"/>
</dbReference>
<dbReference type="InterPro" id="IPR009080">
    <property type="entry name" value="tRNAsynth_Ia_anticodon-bd"/>
</dbReference>
<dbReference type="InterPro" id="IPR009008">
    <property type="entry name" value="Val/Leu/Ile-tRNA-synth_edit"/>
</dbReference>
<dbReference type="NCBIfam" id="TIGR00392">
    <property type="entry name" value="ileS"/>
    <property type="match status" value="1"/>
</dbReference>
<dbReference type="PANTHER" id="PTHR42765:SF1">
    <property type="entry name" value="ISOLEUCINE--TRNA LIGASE, MITOCHONDRIAL"/>
    <property type="match status" value="1"/>
</dbReference>
<dbReference type="PANTHER" id="PTHR42765">
    <property type="entry name" value="SOLEUCYL-TRNA SYNTHETASE"/>
    <property type="match status" value="1"/>
</dbReference>
<dbReference type="Pfam" id="PF08264">
    <property type="entry name" value="Anticodon_1"/>
    <property type="match status" value="1"/>
</dbReference>
<dbReference type="Pfam" id="PF00133">
    <property type="entry name" value="tRNA-synt_1"/>
    <property type="match status" value="1"/>
</dbReference>
<dbReference type="PRINTS" id="PR00984">
    <property type="entry name" value="TRNASYNTHILE"/>
</dbReference>
<dbReference type="SUPFAM" id="SSF47323">
    <property type="entry name" value="Anticodon-binding domain of a subclass of class I aminoacyl-tRNA synthetases"/>
    <property type="match status" value="1"/>
</dbReference>
<dbReference type="SUPFAM" id="SSF52374">
    <property type="entry name" value="Nucleotidylyl transferase"/>
    <property type="match status" value="1"/>
</dbReference>
<dbReference type="SUPFAM" id="SSF50677">
    <property type="entry name" value="ValRS/IleRS/LeuRS editing domain"/>
    <property type="match status" value="1"/>
</dbReference>
<dbReference type="PROSITE" id="PS00178">
    <property type="entry name" value="AA_TRNA_LIGASE_I"/>
    <property type="match status" value="1"/>
</dbReference>
<gene>
    <name evidence="1" type="primary">ileS</name>
    <name type="ordered locus">SpyM3_1166</name>
</gene>
<reference key="1">
    <citation type="journal article" date="2002" name="Proc. Natl. Acad. Sci. U.S.A.">
        <title>Genome sequence of a serotype M3 strain of group A Streptococcus: phage-encoded toxins, the high-virulence phenotype, and clone emergence.</title>
        <authorList>
            <person name="Beres S.B."/>
            <person name="Sylva G.L."/>
            <person name="Barbian K.D."/>
            <person name="Lei B."/>
            <person name="Hoff J.S."/>
            <person name="Mammarella N.D."/>
            <person name="Liu M.-Y."/>
            <person name="Smoot J.C."/>
            <person name="Porcella S.F."/>
            <person name="Parkins L.D."/>
            <person name="Campbell D.S."/>
            <person name="Smith T.M."/>
            <person name="McCormick J.K."/>
            <person name="Leung D.Y.M."/>
            <person name="Schlievert P.M."/>
            <person name="Musser J.M."/>
        </authorList>
    </citation>
    <scope>NUCLEOTIDE SEQUENCE [LARGE SCALE GENOMIC DNA]</scope>
    <source>
        <strain>ATCC BAA-595 / MGAS315</strain>
    </source>
</reference>
<keyword id="KW-0030">Aminoacyl-tRNA synthetase</keyword>
<keyword id="KW-0067">ATP-binding</keyword>
<keyword id="KW-0963">Cytoplasm</keyword>
<keyword id="KW-0436">Ligase</keyword>
<keyword id="KW-0547">Nucleotide-binding</keyword>
<keyword id="KW-0648">Protein biosynthesis</keyword>
<protein>
    <recommendedName>
        <fullName evidence="1">Isoleucine--tRNA ligase</fullName>
        <ecNumber evidence="1">6.1.1.5</ecNumber>
    </recommendedName>
    <alternativeName>
        <fullName evidence="1">Isoleucyl-tRNA synthetase</fullName>
        <shortName evidence="1">IleRS</shortName>
    </alternativeName>
</protein>